<sequence>MKWTDAQLIAEELYDRNPDLDPKTVRFTDLHKWICELENFDDDPNKSNESILEAILLKWLDEFE</sequence>
<protein>
    <recommendedName>
        <fullName>Protein IscX</fullName>
    </recommendedName>
</protein>
<accession>P44668</accession>
<feature type="chain" id="PRO_0000211857" description="Protein IscX">
    <location>
        <begin position="1"/>
        <end position="64"/>
    </location>
</feature>
<name>ISCX_HAEIN</name>
<dbReference type="EMBL" id="L42023">
    <property type="protein sequence ID" value="AAC22029.1"/>
    <property type="molecule type" value="Genomic_DNA"/>
</dbReference>
<dbReference type="PIR" id="B64150">
    <property type="entry name" value="B64150"/>
</dbReference>
<dbReference type="RefSeq" id="NP_438532.1">
    <property type="nucleotide sequence ID" value="NC_000907.1"/>
</dbReference>
<dbReference type="SMR" id="P44668"/>
<dbReference type="STRING" id="71421.HI_0371"/>
<dbReference type="EnsemblBacteria" id="AAC22029">
    <property type="protein sequence ID" value="AAC22029"/>
    <property type="gene ID" value="HI_0371"/>
</dbReference>
<dbReference type="KEGG" id="hin:HI_0371"/>
<dbReference type="PATRIC" id="fig|71421.8.peg.389"/>
<dbReference type="eggNOG" id="COG2975">
    <property type="taxonomic scope" value="Bacteria"/>
</dbReference>
<dbReference type="HOGENOM" id="CLU_168040_1_0_6"/>
<dbReference type="OrthoDB" id="9800346at2"/>
<dbReference type="PhylomeDB" id="P44668"/>
<dbReference type="BioCyc" id="HINF71421:G1GJ1-384-MONOMER"/>
<dbReference type="Proteomes" id="UP000000579">
    <property type="component" value="Chromosome"/>
</dbReference>
<dbReference type="GO" id="GO:0005829">
    <property type="term" value="C:cytosol"/>
    <property type="evidence" value="ECO:0000318"/>
    <property type="project" value="GO_Central"/>
</dbReference>
<dbReference type="GO" id="GO:0008198">
    <property type="term" value="F:ferrous iron binding"/>
    <property type="evidence" value="ECO:0000318"/>
    <property type="project" value="GO_Central"/>
</dbReference>
<dbReference type="GO" id="GO:0016226">
    <property type="term" value="P:iron-sulfur cluster assembly"/>
    <property type="evidence" value="ECO:0007669"/>
    <property type="project" value="InterPro"/>
</dbReference>
<dbReference type="FunFam" id="1.10.10.600:FF:000001">
    <property type="entry name" value="Fe-S assembly protein IscX"/>
    <property type="match status" value="1"/>
</dbReference>
<dbReference type="Gene3D" id="1.10.10.600">
    <property type="entry name" value="IscX-like"/>
    <property type="match status" value="1"/>
</dbReference>
<dbReference type="InterPro" id="IPR007479">
    <property type="entry name" value="ISC_FeS_clus_asmbl_IscsX"/>
</dbReference>
<dbReference type="InterPro" id="IPR036762">
    <property type="entry name" value="IscX-like_sf"/>
</dbReference>
<dbReference type="NCBIfam" id="TIGR03412">
    <property type="entry name" value="iscX_yfhJ"/>
    <property type="match status" value="1"/>
</dbReference>
<dbReference type="PANTHER" id="PTHR37532">
    <property type="entry name" value="PROTEIN ISCX"/>
    <property type="match status" value="1"/>
</dbReference>
<dbReference type="PANTHER" id="PTHR37532:SF1">
    <property type="entry name" value="PROTEIN ISCX"/>
    <property type="match status" value="1"/>
</dbReference>
<dbReference type="Pfam" id="PF04384">
    <property type="entry name" value="Fe-S_assembly"/>
    <property type="match status" value="1"/>
</dbReference>
<dbReference type="PIRSF" id="PIRSF039003">
    <property type="entry name" value="IscX"/>
    <property type="match status" value="1"/>
</dbReference>
<dbReference type="SUPFAM" id="SSF140319">
    <property type="entry name" value="IscX-like"/>
    <property type="match status" value="1"/>
</dbReference>
<comment type="function">
    <text evidence="1">May function as iron donor in the assembly of iron-sulfur clusters.</text>
</comment>
<comment type="similarity">
    <text evidence="2">Belongs to the IscX family.</text>
</comment>
<evidence type="ECO:0000250" key="1"/>
<evidence type="ECO:0000305" key="2"/>
<keyword id="KW-1185">Reference proteome</keyword>
<reference key="1">
    <citation type="journal article" date="1995" name="Science">
        <title>Whole-genome random sequencing and assembly of Haemophilus influenzae Rd.</title>
        <authorList>
            <person name="Fleischmann R.D."/>
            <person name="Adams M.D."/>
            <person name="White O."/>
            <person name="Clayton R.A."/>
            <person name="Kirkness E.F."/>
            <person name="Kerlavage A.R."/>
            <person name="Bult C.J."/>
            <person name="Tomb J.-F."/>
            <person name="Dougherty B.A."/>
            <person name="Merrick J.M."/>
            <person name="McKenney K."/>
            <person name="Sutton G.G."/>
            <person name="FitzHugh W."/>
            <person name="Fields C.A."/>
            <person name="Gocayne J.D."/>
            <person name="Scott J.D."/>
            <person name="Shirley R."/>
            <person name="Liu L.-I."/>
            <person name="Glodek A."/>
            <person name="Kelley J.M."/>
            <person name="Weidman J.F."/>
            <person name="Phillips C.A."/>
            <person name="Spriggs T."/>
            <person name="Hedblom E."/>
            <person name="Cotton M.D."/>
            <person name="Utterback T.R."/>
            <person name="Hanna M.C."/>
            <person name="Nguyen D.T."/>
            <person name="Saudek D.M."/>
            <person name="Brandon R.C."/>
            <person name="Fine L.D."/>
            <person name="Fritchman J.L."/>
            <person name="Fuhrmann J.L."/>
            <person name="Geoghagen N.S.M."/>
            <person name="Gnehm C.L."/>
            <person name="McDonald L.A."/>
            <person name="Small K.V."/>
            <person name="Fraser C.M."/>
            <person name="Smith H.O."/>
            <person name="Venter J.C."/>
        </authorList>
    </citation>
    <scope>NUCLEOTIDE SEQUENCE [LARGE SCALE GENOMIC DNA]</scope>
    <source>
        <strain>ATCC 51907 / DSM 11121 / KW20 / Rd</strain>
    </source>
</reference>
<organism>
    <name type="scientific">Haemophilus influenzae (strain ATCC 51907 / DSM 11121 / KW20 / Rd)</name>
    <dbReference type="NCBI Taxonomy" id="71421"/>
    <lineage>
        <taxon>Bacteria</taxon>
        <taxon>Pseudomonadati</taxon>
        <taxon>Pseudomonadota</taxon>
        <taxon>Gammaproteobacteria</taxon>
        <taxon>Pasteurellales</taxon>
        <taxon>Pasteurellaceae</taxon>
        <taxon>Haemophilus</taxon>
    </lineage>
</organism>
<proteinExistence type="inferred from homology"/>
<gene>
    <name type="primary">iscX</name>
    <name type="ordered locus">HI_0371</name>
</gene>